<feature type="chain" id="PRO_1000094236" description="2-C-methyl-D-erythritol 2,4-cyclodiphosphate synthase">
    <location>
        <begin position="1"/>
        <end position="158"/>
    </location>
</feature>
<feature type="binding site" evidence="1">
    <location>
        <begin position="9"/>
        <end position="11"/>
    </location>
    <ligand>
        <name>4-CDP-2-C-methyl-D-erythritol 2-phosphate</name>
        <dbReference type="ChEBI" id="CHEBI:57919"/>
    </ligand>
</feature>
<feature type="binding site" evidence="1">
    <location>
        <position position="9"/>
    </location>
    <ligand>
        <name>a divalent metal cation</name>
        <dbReference type="ChEBI" id="CHEBI:60240"/>
    </ligand>
</feature>
<feature type="binding site" evidence="1">
    <location>
        <position position="11"/>
    </location>
    <ligand>
        <name>a divalent metal cation</name>
        <dbReference type="ChEBI" id="CHEBI:60240"/>
    </ligand>
</feature>
<feature type="binding site" evidence="1">
    <location>
        <begin position="35"/>
        <end position="36"/>
    </location>
    <ligand>
        <name>4-CDP-2-C-methyl-D-erythritol 2-phosphate</name>
        <dbReference type="ChEBI" id="CHEBI:57919"/>
    </ligand>
</feature>
<feature type="binding site" evidence="1">
    <location>
        <position position="43"/>
    </location>
    <ligand>
        <name>a divalent metal cation</name>
        <dbReference type="ChEBI" id="CHEBI:60240"/>
    </ligand>
</feature>
<feature type="binding site" evidence="1">
    <location>
        <begin position="57"/>
        <end position="59"/>
    </location>
    <ligand>
        <name>4-CDP-2-C-methyl-D-erythritol 2-phosphate</name>
        <dbReference type="ChEBI" id="CHEBI:57919"/>
    </ligand>
</feature>
<feature type="binding site" evidence="1">
    <location>
        <begin position="62"/>
        <end position="66"/>
    </location>
    <ligand>
        <name>4-CDP-2-C-methyl-D-erythritol 2-phosphate</name>
        <dbReference type="ChEBI" id="CHEBI:57919"/>
    </ligand>
</feature>
<feature type="binding site" evidence="1">
    <location>
        <begin position="133"/>
        <end position="136"/>
    </location>
    <ligand>
        <name>4-CDP-2-C-methyl-D-erythritol 2-phosphate</name>
        <dbReference type="ChEBI" id="CHEBI:57919"/>
    </ligand>
</feature>
<feature type="binding site" evidence="1">
    <location>
        <position position="140"/>
    </location>
    <ligand>
        <name>4-CDP-2-C-methyl-D-erythritol 2-phosphate</name>
        <dbReference type="ChEBI" id="CHEBI:57919"/>
    </ligand>
</feature>
<feature type="binding site" evidence="1">
    <location>
        <position position="143"/>
    </location>
    <ligand>
        <name>4-CDP-2-C-methyl-D-erythritol 2-phosphate</name>
        <dbReference type="ChEBI" id="CHEBI:57919"/>
    </ligand>
</feature>
<feature type="site" description="Transition state stabilizer" evidence="1">
    <location>
        <position position="35"/>
    </location>
</feature>
<feature type="site" description="Transition state stabilizer" evidence="1">
    <location>
        <position position="134"/>
    </location>
</feature>
<accession>B3H1E2</accession>
<reference key="1">
    <citation type="submission" date="2008-06" db="EMBL/GenBank/DDBJ databases">
        <title>Genome and proteome analysis of A. pleuropneumoniae serotype 7.</title>
        <authorList>
            <person name="Linke B."/>
            <person name="Buettner F."/>
            <person name="Martinez-Arias R."/>
            <person name="Goesmann A."/>
            <person name="Baltes N."/>
            <person name="Tegetmeyer H."/>
            <person name="Singh M."/>
            <person name="Gerlach G.F."/>
        </authorList>
    </citation>
    <scope>NUCLEOTIDE SEQUENCE [LARGE SCALE GENOMIC DNA]</scope>
    <source>
        <strain>AP76</strain>
    </source>
</reference>
<evidence type="ECO:0000255" key="1">
    <source>
        <dbReference type="HAMAP-Rule" id="MF_00107"/>
    </source>
</evidence>
<comment type="function">
    <text evidence="1">Involved in the biosynthesis of isopentenyl diphosphate (IPP) and dimethylallyl diphosphate (DMAPP), two major building blocks of isoprenoid compounds. Catalyzes the conversion of 4-diphosphocytidyl-2-C-methyl-D-erythritol 2-phosphate (CDP-ME2P) to 2-C-methyl-D-erythritol 2,4-cyclodiphosphate (ME-CPP) with a corresponding release of cytidine 5-monophosphate (CMP).</text>
</comment>
<comment type="catalytic activity">
    <reaction evidence="1">
        <text>4-CDP-2-C-methyl-D-erythritol 2-phosphate = 2-C-methyl-D-erythritol 2,4-cyclic diphosphate + CMP</text>
        <dbReference type="Rhea" id="RHEA:23864"/>
        <dbReference type="ChEBI" id="CHEBI:57919"/>
        <dbReference type="ChEBI" id="CHEBI:58483"/>
        <dbReference type="ChEBI" id="CHEBI:60377"/>
        <dbReference type="EC" id="4.6.1.12"/>
    </reaction>
</comment>
<comment type="cofactor">
    <cofactor evidence="1">
        <name>a divalent metal cation</name>
        <dbReference type="ChEBI" id="CHEBI:60240"/>
    </cofactor>
    <text evidence="1">Binds 1 divalent metal cation per subunit.</text>
</comment>
<comment type="pathway">
    <text evidence="1">Isoprenoid biosynthesis; isopentenyl diphosphate biosynthesis via DXP pathway; isopentenyl diphosphate from 1-deoxy-D-xylulose 5-phosphate: step 4/6.</text>
</comment>
<comment type="subunit">
    <text evidence="1">Homotrimer.</text>
</comment>
<comment type="similarity">
    <text evidence="1">Belongs to the IspF family.</text>
</comment>
<dbReference type="EC" id="4.6.1.12" evidence="1"/>
<dbReference type="EMBL" id="CP001091">
    <property type="protein sequence ID" value="ACE61514.1"/>
    <property type="molecule type" value="Genomic_DNA"/>
</dbReference>
<dbReference type="RefSeq" id="WP_005607742.1">
    <property type="nucleotide sequence ID" value="NC_010939.1"/>
</dbReference>
<dbReference type="SMR" id="B3H1E2"/>
<dbReference type="KEGG" id="apa:APP7_0862"/>
<dbReference type="HOGENOM" id="CLU_084630_2_0_6"/>
<dbReference type="UniPathway" id="UPA00056">
    <property type="reaction ID" value="UER00095"/>
</dbReference>
<dbReference type="Proteomes" id="UP000001226">
    <property type="component" value="Chromosome"/>
</dbReference>
<dbReference type="GO" id="GO:0008685">
    <property type="term" value="F:2-C-methyl-D-erythritol 2,4-cyclodiphosphate synthase activity"/>
    <property type="evidence" value="ECO:0007669"/>
    <property type="project" value="UniProtKB-UniRule"/>
</dbReference>
<dbReference type="GO" id="GO:0046872">
    <property type="term" value="F:metal ion binding"/>
    <property type="evidence" value="ECO:0007669"/>
    <property type="project" value="UniProtKB-KW"/>
</dbReference>
<dbReference type="GO" id="GO:0019288">
    <property type="term" value="P:isopentenyl diphosphate biosynthetic process, methylerythritol 4-phosphate pathway"/>
    <property type="evidence" value="ECO:0007669"/>
    <property type="project" value="UniProtKB-UniRule"/>
</dbReference>
<dbReference type="GO" id="GO:0016114">
    <property type="term" value="P:terpenoid biosynthetic process"/>
    <property type="evidence" value="ECO:0007669"/>
    <property type="project" value="InterPro"/>
</dbReference>
<dbReference type="CDD" id="cd00554">
    <property type="entry name" value="MECDP_synthase"/>
    <property type="match status" value="1"/>
</dbReference>
<dbReference type="FunFam" id="3.30.1330.50:FF:000001">
    <property type="entry name" value="2-C-methyl-D-erythritol 2,4-cyclodiphosphate synthase"/>
    <property type="match status" value="1"/>
</dbReference>
<dbReference type="Gene3D" id="3.30.1330.50">
    <property type="entry name" value="2-C-methyl-D-erythritol 2,4-cyclodiphosphate synthase"/>
    <property type="match status" value="1"/>
</dbReference>
<dbReference type="HAMAP" id="MF_00107">
    <property type="entry name" value="IspF"/>
    <property type="match status" value="1"/>
</dbReference>
<dbReference type="InterPro" id="IPR003526">
    <property type="entry name" value="MECDP_synthase"/>
</dbReference>
<dbReference type="InterPro" id="IPR020555">
    <property type="entry name" value="MECDP_synthase_CS"/>
</dbReference>
<dbReference type="InterPro" id="IPR036571">
    <property type="entry name" value="MECDP_synthase_sf"/>
</dbReference>
<dbReference type="NCBIfam" id="TIGR00151">
    <property type="entry name" value="ispF"/>
    <property type="match status" value="1"/>
</dbReference>
<dbReference type="PANTHER" id="PTHR43181">
    <property type="entry name" value="2-C-METHYL-D-ERYTHRITOL 2,4-CYCLODIPHOSPHATE SYNTHASE, CHLOROPLASTIC"/>
    <property type="match status" value="1"/>
</dbReference>
<dbReference type="PANTHER" id="PTHR43181:SF1">
    <property type="entry name" value="2-C-METHYL-D-ERYTHRITOL 2,4-CYCLODIPHOSPHATE SYNTHASE, CHLOROPLASTIC"/>
    <property type="match status" value="1"/>
</dbReference>
<dbReference type="Pfam" id="PF02542">
    <property type="entry name" value="YgbB"/>
    <property type="match status" value="1"/>
</dbReference>
<dbReference type="SUPFAM" id="SSF69765">
    <property type="entry name" value="IpsF-like"/>
    <property type="match status" value="1"/>
</dbReference>
<dbReference type="PROSITE" id="PS01350">
    <property type="entry name" value="ISPF"/>
    <property type="match status" value="1"/>
</dbReference>
<sequence length="158" mass="17273">MIRIGHGFDVHAFGQDRPLMICGVEVPYHTGFIAHSDGDVALHALTDALLGAVALGDIGKLFPDTDMQYKNADSRKLLIEAYRQVRAQGYKVANVDVTIIAQAPKMRPYIDQMRQTIADDLQCDVMQVNVKATTTEKLGFTGRGEGIACEAVALLIKQ</sequence>
<organism>
    <name type="scientific">Actinobacillus pleuropneumoniae serotype 7 (strain AP76)</name>
    <dbReference type="NCBI Taxonomy" id="537457"/>
    <lineage>
        <taxon>Bacteria</taxon>
        <taxon>Pseudomonadati</taxon>
        <taxon>Pseudomonadota</taxon>
        <taxon>Gammaproteobacteria</taxon>
        <taxon>Pasteurellales</taxon>
        <taxon>Pasteurellaceae</taxon>
        <taxon>Actinobacillus</taxon>
    </lineage>
</organism>
<protein>
    <recommendedName>
        <fullName evidence="1">2-C-methyl-D-erythritol 2,4-cyclodiphosphate synthase</fullName>
        <shortName evidence="1">MECDP-synthase</shortName>
        <shortName evidence="1">MECPP-synthase</shortName>
        <shortName evidence="1">MECPS</shortName>
        <ecNumber evidence="1">4.6.1.12</ecNumber>
    </recommendedName>
</protein>
<keyword id="KW-0414">Isoprene biosynthesis</keyword>
<keyword id="KW-0456">Lyase</keyword>
<keyword id="KW-0479">Metal-binding</keyword>
<gene>
    <name evidence="1" type="primary">ispF</name>
    <name type="ordered locus">APP7_0862</name>
</gene>
<proteinExistence type="inferred from homology"/>
<name>ISPF_ACTP7</name>